<name>PUR5_EXIS2</name>
<comment type="catalytic activity">
    <reaction evidence="1">
        <text>2-formamido-N(1)-(5-O-phospho-beta-D-ribosyl)acetamidine + ATP = 5-amino-1-(5-phospho-beta-D-ribosyl)imidazole + ADP + phosphate + H(+)</text>
        <dbReference type="Rhea" id="RHEA:23032"/>
        <dbReference type="ChEBI" id="CHEBI:15378"/>
        <dbReference type="ChEBI" id="CHEBI:30616"/>
        <dbReference type="ChEBI" id="CHEBI:43474"/>
        <dbReference type="ChEBI" id="CHEBI:137981"/>
        <dbReference type="ChEBI" id="CHEBI:147287"/>
        <dbReference type="ChEBI" id="CHEBI:456216"/>
        <dbReference type="EC" id="6.3.3.1"/>
    </reaction>
</comment>
<comment type="pathway">
    <text evidence="1">Purine metabolism; IMP biosynthesis via de novo pathway; 5-amino-1-(5-phospho-D-ribosyl)imidazole from N(2)-formyl-N(1)-(5-phospho-D-ribosyl)glycinamide: step 2/2.</text>
</comment>
<comment type="subcellular location">
    <subcellularLocation>
        <location evidence="1">Cytoplasm</location>
    </subcellularLocation>
</comment>
<comment type="similarity">
    <text evidence="1">Belongs to the AIR synthase family.</text>
</comment>
<reference key="1">
    <citation type="submission" date="2008-04" db="EMBL/GenBank/DDBJ databases">
        <title>Complete sequence of chromosome of Exiguobacterium sibiricum 255-15.</title>
        <authorList>
            <consortium name="US DOE Joint Genome Institute"/>
            <person name="Copeland A."/>
            <person name="Lucas S."/>
            <person name="Lapidus A."/>
            <person name="Glavina del Rio T."/>
            <person name="Dalin E."/>
            <person name="Tice H."/>
            <person name="Bruce D."/>
            <person name="Goodwin L."/>
            <person name="Pitluck S."/>
            <person name="Kiss H."/>
            <person name="Chertkov O."/>
            <person name="Monk C."/>
            <person name="Brettin T."/>
            <person name="Detter J.C."/>
            <person name="Han C."/>
            <person name="Kuske C.R."/>
            <person name="Schmutz J."/>
            <person name="Larimer F."/>
            <person name="Land M."/>
            <person name="Hauser L."/>
            <person name="Kyrpides N."/>
            <person name="Mikhailova N."/>
            <person name="Vishnivetskaya T."/>
            <person name="Rodrigues D.F."/>
            <person name="Gilichinsky D."/>
            <person name="Tiedje J."/>
            <person name="Richardson P."/>
        </authorList>
    </citation>
    <scope>NUCLEOTIDE SEQUENCE [LARGE SCALE GENOMIC DNA]</scope>
    <source>
        <strain>DSM 17290 / CCUG 55495 / CIP 109462 / JCM 13490 / 255-15</strain>
    </source>
</reference>
<keyword id="KW-0067">ATP-binding</keyword>
<keyword id="KW-0963">Cytoplasm</keyword>
<keyword id="KW-0436">Ligase</keyword>
<keyword id="KW-0547">Nucleotide-binding</keyword>
<keyword id="KW-0658">Purine biosynthesis</keyword>
<keyword id="KW-1185">Reference proteome</keyword>
<gene>
    <name evidence="1" type="primary">purM</name>
    <name type="ordered locus">Exig_0455</name>
</gene>
<dbReference type="EC" id="6.3.3.1" evidence="1"/>
<dbReference type="EMBL" id="CP001022">
    <property type="protein sequence ID" value="ACB59937.1"/>
    <property type="molecule type" value="Genomic_DNA"/>
</dbReference>
<dbReference type="RefSeq" id="WP_012369361.1">
    <property type="nucleotide sequence ID" value="NC_010556.1"/>
</dbReference>
<dbReference type="SMR" id="B1YJ07"/>
<dbReference type="STRING" id="262543.Exig_0455"/>
<dbReference type="KEGG" id="esi:Exig_0455"/>
<dbReference type="eggNOG" id="COG0150">
    <property type="taxonomic scope" value="Bacteria"/>
</dbReference>
<dbReference type="HOGENOM" id="CLU_047116_0_0_9"/>
<dbReference type="OrthoDB" id="9802507at2"/>
<dbReference type="UniPathway" id="UPA00074">
    <property type="reaction ID" value="UER00129"/>
</dbReference>
<dbReference type="Proteomes" id="UP000001681">
    <property type="component" value="Chromosome"/>
</dbReference>
<dbReference type="GO" id="GO:0005829">
    <property type="term" value="C:cytosol"/>
    <property type="evidence" value="ECO:0007669"/>
    <property type="project" value="TreeGrafter"/>
</dbReference>
<dbReference type="GO" id="GO:0005524">
    <property type="term" value="F:ATP binding"/>
    <property type="evidence" value="ECO:0007669"/>
    <property type="project" value="UniProtKB-KW"/>
</dbReference>
<dbReference type="GO" id="GO:0004637">
    <property type="term" value="F:phosphoribosylamine-glycine ligase activity"/>
    <property type="evidence" value="ECO:0007669"/>
    <property type="project" value="TreeGrafter"/>
</dbReference>
<dbReference type="GO" id="GO:0004641">
    <property type="term" value="F:phosphoribosylformylglycinamidine cyclo-ligase activity"/>
    <property type="evidence" value="ECO:0007669"/>
    <property type="project" value="UniProtKB-UniRule"/>
</dbReference>
<dbReference type="GO" id="GO:0006189">
    <property type="term" value="P:'de novo' IMP biosynthetic process"/>
    <property type="evidence" value="ECO:0007669"/>
    <property type="project" value="UniProtKB-UniRule"/>
</dbReference>
<dbReference type="GO" id="GO:0046084">
    <property type="term" value="P:adenine biosynthetic process"/>
    <property type="evidence" value="ECO:0007669"/>
    <property type="project" value="TreeGrafter"/>
</dbReference>
<dbReference type="CDD" id="cd02196">
    <property type="entry name" value="PurM"/>
    <property type="match status" value="1"/>
</dbReference>
<dbReference type="FunFam" id="3.30.1330.10:FF:000001">
    <property type="entry name" value="Phosphoribosylformylglycinamidine cyclo-ligase"/>
    <property type="match status" value="1"/>
</dbReference>
<dbReference type="FunFam" id="3.90.650.10:FF:000011">
    <property type="entry name" value="Phosphoribosylformylglycinamidine cyclo-ligase"/>
    <property type="match status" value="1"/>
</dbReference>
<dbReference type="Gene3D" id="3.90.650.10">
    <property type="entry name" value="PurM-like C-terminal domain"/>
    <property type="match status" value="1"/>
</dbReference>
<dbReference type="Gene3D" id="3.30.1330.10">
    <property type="entry name" value="PurM-like, N-terminal domain"/>
    <property type="match status" value="1"/>
</dbReference>
<dbReference type="HAMAP" id="MF_00741">
    <property type="entry name" value="AIRS"/>
    <property type="match status" value="1"/>
</dbReference>
<dbReference type="InterPro" id="IPR010918">
    <property type="entry name" value="PurM-like_C_dom"/>
</dbReference>
<dbReference type="InterPro" id="IPR036676">
    <property type="entry name" value="PurM-like_C_sf"/>
</dbReference>
<dbReference type="InterPro" id="IPR016188">
    <property type="entry name" value="PurM-like_N"/>
</dbReference>
<dbReference type="InterPro" id="IPR036921">
    <property type="entry name" value="PurM-like_N_sf"/>
</dbReference>
<dbReference type="InterPro" id="IPR004733">
    <property type="entry name" value="PurM_cligase"/>
</dbReference>
<dbReference type="NCBIfam" id="TIGR00878">
    <property type="entry name" value="purM"/>
    <property type="match status" value="1"/>
</dbReference>
<dbReference type="PANTHER" id="PTHR10520:SF12">
    <property type="entry name" value="TRIFUNCTIONAL PURINE BIOSYNTHETIC PROTEIN ADENOSINE-3"/>
    <property type="match status" value="1"/>
</dbReference>
<dbReference type="PANTHER" id="PTHR10520">
    <property type="entry name" value="TRIFUNCTIONAL PURINE BIOSYNTHETIC PROTEIN ADENOSINE-3-RELATED"/>
    <property type="match status" value="1"/>
</dbReference>
<dbReference type="Pfam" id="PF00586">
    <property type="entry name" value="AIRS"/>
    <property type="match status" value="1"/>
</dbReference>
<dbReference type="Pfam" id="PF02769">
    <property type="entry name" value="AIRS_C"/>
    <property type="match status" value="1"/>
</dbReference>
<dbReference type="SUPFAM" id="SSF56042">
    <property type="entry name" value="PurM C-terminal domain-like"/>
    <property type="match status" value="1"/>
</dbReference>
<dbReference type="SUPFAM" id="SSF55326">
    <property type="entry name" value="PurM N-terminal domain-like"/>
    <property type="match status" value="1"/>
</dbReference>
<sequence length="344" mass="36927">MSKQYEAAGVSLTAGYESVSRMKKHVARSMRKEVMTGLGSFGAMFDLSQLNLKEPVLVSGTDGVGTKLKLAFALDQHDTIGIDCVAMCVNDIIVQGAEPLYFLDYIALGKAIPAKIERIVAGVAEGCVQSGCTLIGGETAEMPGMYADGEYDIAGFAVGAVEKQKLITGEHVQPGDVILGLASSGVHSNGFSLVRKIVAESGLRYEDELMMFGSTIGNTLLMPTRIYVEAVKAALETEKIQAMVHITGGGFYENVPRVLPEGCGATFDPKKWPTLPVFDWLEQAGNVPRHDMYNVFNMGIGYMMIVKPEDVAAVSARLARENETVYTIGTVTSEPGVRILGVDQ</sequence>
<feature type="chain" id="PRO_1000193024" description="Phosphoribosylformylglycinamidine cyclo-ligase">
    <location>
        <begin position="1"/>
        <end position="344"/>
    </location>
</feature>
<protein>
    <recommendedName>
        <fullName evidence="1">Phosphoribosylformylglycinamidine cyclo-ligase</fullName>
        <ecNumber evidence="1">6.3.3.1</ecNumber>
    </recommendedName>
    <alternativeName>
        <fullName evidence="1">AIR synthase</fullName>
    </alternativeName>
    <alternativeName>
        <fullName evidence="1">AIRS</fullName>
    </alternativeName>
    <alternativeName>
        <fullName evidence="1">Phosphoribosyl-aminoimidazole synthetase</fullName>
    </alternativeName>
</protein>
<organism>
    <name type="scientific">Exiguobacterium sibiricum (strain DSM 17290 / CCUG 55495 / CIP 109462 / JCM 13490 / 255-15)</name>
    <dbReference type="NCBI Taxonomy" id="262543"/>
    <lineage>
        <taxon>Bacteria</taxon>
        <taxon>Bacillati</taxon>
        <taxon>Bacillota</taxon>
        <taxon>Bacilli</taxon>
        <taxon>Bacillales</taxon>
        <taxon>Bacillales Family XII. Incertae Sedis</taxon>
        <taxon>Exiguobacterium</taxon>
    </lineage>
</organism>
<accession>B1YJ07</accession>
<evidence type="ECO:0000255" key="1">
    <source>
        <dbReference type="HAMAP-Rule" id="MF_00741"/>
    </source>
</evidence>
<proteinExistence type="inferred from homology"/>